<reference key="1">
    <citation type="journal article" date="2001" name="Proc. Natl. Acad. Sci. U.S.A.">
        <title>A human protein containing multiple types of protease-inhibitory modules.</title>
        <authorList>
            <person name="Trexler M."/>
            <person name="Banyai L."/>
            <person name="Patthy L."/>
        </authorList>
    </citation>
    <scope>NUCLEOTIDE SEQUENCE [MRNA]</scope>
    <source>
        <tissue>Lung</tissue>
    </source>
</reference>
<reference key="2">
    <citation type="journal article" date="2004" name="Nat. Genet.">
        <title>Complete sequencing and characterization of 21,243 full-length human cDNAs.</title>
        <authorList>
            <person name="Ota T."/>
            <person name="Suzuki Y."/>
            <person name="Nishikawa T."/>
            <person name="Otsuki T."/>
            <person name="Sugiyama T."/>
            <person name="Irie R."/>
            <person name="Wakamatsu A."/>
            <person name="Hayashi K."/>
            <person name="Sato H."/>
            <person name="Nagai K."/>
            <person name="Kimura K."/>
            <person name="Makita H."/>
            <person name="Sekine M."/>
            <person name="Obayashi M."/>
            <person name="Nishi T."/>
            <person name="Shibahara T."/>
            <person name="Tanaka T."/>
            <person name="Ishii S."/>
            <person name="Yamamoto J."/>
            <person name="Saito K."/>
            <person name="Kawai Y."/>
            <person name="Isono Y."/>
            <person name="Nakamura Y."/>
            <person name="Nagahari K."/>
            <person name="Murakami K."/>
            <person name="Yasuda T."/>
            <person name="Iwayanagi T."/>
            <person name="Wagatsuma M."/>
            <person name="Shiratori A."/>
            <person name="Sudo H."/>
            <person name="Hosoiri T."/>
            <person name="Kaku Y."/>
            <person name="Kodaira H."/>
            <person name="Kondo H."/>
            <person name="Sugawara M."/>
            <person name="Takahashi M."/>
            <person name="Kanda K."/>
            <person name="Yokoi T."/>
            <person name="Furuya T."/>
            <person name="Kikkawa E."/>
            <person name="Omura Y."/>
            <person name="Abe K."/>
            <person name="Kamihara K."/>
            <person name="Katsuta N."/>
            <person name="Sato K."/>
            <person name="Tanikawa M."/>
            <person name="Yamazaki M."/>
            <person name="Ninomiya K."/>
            <person name="Ishibashi T."/>
            <person name="Yamashita H."/>
            <person name="Murakawa K."/>
            <person name="Fujimori K."/>
            <person name="Tanai H."/>
            <person name="Kimata M."/>
            <person name="Watanabe M."/>
            <person name="Hiraoka S."/>
            <person name="Chiba Y."/>
            <person name="Ishida S."/>
            <person name="Ono Y."/>
            <person name="Takiguchi S."/>
            <person name="Watanabe S."/>
            <person name="Yosida M."/>
            <person name="Hotuta T."/>
            <person name="Kusano J."/>
            <person name="Kanehori K."/>
            <person name="Takahashi-Fujii A."/>
            <person name="Hara H."/>
            <person name="Tanase T.-O."/>
            <person name="Nomura Y."/>
            <person name="Togiya S."/>
            <person name="Komai F."/>
            <person name="Hara R."/>
            <person name="Takeuchi K."/>
            <person name="Arita M."/>
            <person name="Imose N."/>
            <person name="Musashino K."/>
            <person name="Yuuki H."/>
            <person name="Oshima A."/>
            <person name="Sasaki N."/>
            <person name="Aotsuka S."/>
            <person name="Yoshikawa Y."/>
            <person name="Matsunawa H."/>
            <person name="Ichihara T."/>
            <person name="Shiohata N."/>
            <person name="Sano S."/>
            <person name="Moriya S."/>
            <person name="Momiyama H."/>
            <person name="Satoh N."/>
            <person name="Takami S."/>
            <person name="Terashima Y."/>
            <person name="Suzuki O."/>
            <person name="Nakagawa S."/>
            <person name="Senoh A."/>
            <person name="Mizoguchi H."/>
            <person name="Goto Y."/>
            <person name="Shimizu F."/>
            <person name="Wakebe H."/>
            <person name="Hishigaki H."/>
            <person name="Watanabe T."/>
            <person name="Sugiyama A."/>
            <person name="Takemoto M."/>
            <person name="Kawakami B."/>
            <person name="Yamazaki M."/>
            <person name="Watanabe K."/>
            <person name="Kumagai A."/>
            <person name="Itakura S."/>
            <person name="Fukuzumi Y."/>
            <person name="Fujimori Y."/>
            <person name="Komiyama M."/>
            <person name="Tashiro H."/>
            <person name="Tanigami A."/>
            <person name="Fujiwara T."/>
            <person name="Ono T."/>
            <person name="Yamada K."/>
            <person name="Fujii Y."/>
            <person name="Ozaki K."/>
            <person name="Hirao M."/>
            <person name="Ohmori Y."/>
            <person name="Kawabata A."/>
            <person name="Hikiji T."/>
            <person name="Kobatake N."/>
            <person name="Inagaki H."/>
            <person name="Ikema Y."/>
            <person name="Okamoto S."/>
            <person name="Okitani R."/>
            <person name="Kawakami T."/>
            <person name="Noguchi S."/>
            <person name="Itoh T."/>
            <person name="Shigeta K."/>
            <person name="Senba T."/>
            <person name="Matsumura K."/>
            <person name="Nakajima Y."/>
            <person name="Mizuno T."/>
            <person name="Morinaga M."/>
            <person name="Sasaki M."/>
            <person name="Togashi T."/>
            <person name="Oyama M."/>
            <person name="Hata H."/>
            <person name="Watanabe M."/>
            <person name="Komatsu T."/>
            <person name="Mizushima-Sugano J."/>
            <person name="Satoh T."/>
            <person name="Shirai Y."/>
            <person name="Takahashi Y."/>
            <person name="Nakagawa K."/>
            <person name="Okumura K."/>
            <person name="Nagase T."/>
            <person name="Nomura N."/>
            <person name="Kikuchi H."/>
            <person name="Masuho Y."/>
            <person name="Yamashita R."/>
            <person name="Nakai K."/>
            <person name="Yada T."/>
            <person name="Nakamura Y."/>
            <person name="Ohara O."/>
            <person name="Isogai T."/>
            <person name="Sugano S."/>
        </authorList>
    </citation>
    <scope>NUCLEOTIDE SEQUENCE [LARGE SCALE MRNA]</scope>
    <source>
        <tissue>Teratocarcinoma</tissue>
    </source>
</reference>
<reference key="3">
    <citation type="journal article" date="2001" name="Hum. Mol. Genet.">
        <title>Sequence, structure and pathology of the fully annotated terminal 2 Mb of the short arm of human chromosome 16.</title>
        <authorList>
            <person name="Daniels R.J."/>
            <person name="Peden J.F."/>
            <person name="Lloyd C."/>
            <person name="Horsley S.W."/>
            <person name="Clark K."/>
            <person name="Tufarelli C."/>
            <person name="Kearney L."/>
            <person name="Buckle V.J."/>
            <person name="Doggett N.A."/>
            <person name="Flint J."/>
            <person name="Higgs D.R."/>
        </authorList>
    </citation>
    <scope>NUCLEOTIDE SEQUENCE [LARGE SCALE GENOMIC DNA]</scope>
</reference>
<reference key="4">
    <citation type="journal article" date="2004" name="Genome Res.">
        <title>The status, quality, and expansion of the NIH full-length cDNA project: the Mammalian Gene Collection (MGC).</title>
        <authorList>
            <consortium name="The MGC Project Team"/>
        </authorList>
    </citation>
    <scope>NUCLEOTIDE SEQUENCE [LARGE SCALE MRNA]</scope>
    <source>
        <tissue>Brain</tissue>
    </source>
</reference>
<reference key="5">
    <citation type="journal article" date="2003" name="Mol. Endocrinol.">
        <title>Regulation of myostatin in vivo by growth and differentiation factor-associated serum protein-1: a novel protein with protease inhibitor and follistatin domains.</title>
        <authorList>
            <person name="Hill J.J."/>
            <person name="Qiu Y."/>
            <person name="Hewick R.M."/>
            <person name="Wolfman N.M."/>
        </authorList>
    </citation>
    <scope>IDENTIFICATION</scope>
</reference>
<reference key="6">
    <citation type="journal article" date="2003" name="Eur. J. Biochem.">
        <title>Expression, purification and characterization of the second Kunitz-type protease inhibitor domain of the human WFIKKN protein.</title>
        <authorList>
            <person name="Nagy A."/>
            <person name="Trexler M."/>
            <person name="Patthy L."/>
        </authorList>
    </citation>
    <scope>DOMAIN</scope>
</reference>
<reference key="7">
    <citation type="journal article" date="2006" name="J. Biomol. NMR">
        <title>Second Kunitz-type protease inhibitor domain of the human WFIKKN1 protein.</title>
        <authorList>
            <person name="Liepinsh E."/>
            <person name="Nagy A."/>
            <person name="Trexler M."/>
            <person name="Patthy L."/>
            <person name="Otting G."/>
        </authorList>
    </citation>
    <scope>STRUCTURE BY NMR OF 357-411</scope>
</reference>
<accession>Q96NZ8</accession>
<accession>Q7LDW0</accession>
<accession>Q8NBQ1</accession>
<accession>Q96S20</accession>
<name>WFKN1_HUMAN</name>
<gene>
    <name type="primary">WFIKKN1</name>
    <name type="synonym">C16orf12</name>
    <name type="synonym">GASP2</name>
    <name type="synonym">WFIKKN</name>
    <name type="ORF">PSEC0040</name>
</gene>
<comment type="function">
    <text evidence="1">Protease-inhibitor that contains multiple distinct protease inhibitor domains. Probably has serine protease- and metalloprotease-inhibitor activity (By similarity).</text>
</comment>
<comment type="interaction">
    <interactant intactId="EBI-2363713">
        <id>Q96NZ8</id>
    </interactant>
    <interactant intactId="EBI-743771">
        <id>Q92624</id>
        <label>APPBP2</label>
    </interactant>
    <organismsDiffer>false</organismsDiffer>
    <experiments>3</experiments>
</comment>
<comment type="interaction">
    <interactant intactId="EBI-2363713">
        <id>Q96NZ8</id>
    </interactant>
    <interactant intactId="EBI-8542977">
        <id>O14793</id>
        <label>MSTN</label>
    </interactant>
    <organismsDiffer>false</organismsDiffer>
    <experiments>4</experiments>
</comment>
<comment type="subcellular location">
    <subcellularLocation>
        <location evidence="1">Secreted</location>
    </subcellularLocation>
</comment>
<comment type="tissue specificity">
    <text>Expressed in pancreas, kidney, liver, placenta, and lung.</text>
</comment>
<comment type="domain">
    <text evidence="8">The second BPTI/Kunitz inhibitor domain is able to inhibit trypsin. It has however no activity toward chymotrypsin, elastase, plasmin, pancreatic kallikrein, lung tryptase, plasma kallikrein, thrombin, urokinase or tissue plasminogen activator.</text>
</comment>
<comment type="similarity">
    <text evidence="9">Belongs to the WFIKKN family.</text>
</comment>
<comment type="sequence caution" evidence="9">
    <conflict type="erroneous gene model prediction">
        <sequence resource="EMBL-CDS" id="AAK61237"/>
    </conflict>
</comment>
<comment type="sequence caution" evidence="9">
    <conflict type="frameshift">
        <sequence resource="EMBL-CDS" id="BAC11566"/>
    </conflict>
</comment>
<evidence type="ECO:0000250" key="1"/>
<evidence type="ECO:0000255" key="2"/>
<evidence type="ECO:0000255" key="3">
    <source>
        <dbReference type="PROSITE-ProRule" id="PRU00031"/>
    </source>
</evidence>
<evidence type="ECO:0000255" key="4">
    <source>
        <dbReference type="PROSITE-ProRule" id="PRU00295"/>
    </source>
</evidence>
<evidence type="ECO:0000255" key="5">
    <source>
        <dbReference type="PROSITE-ProRule" id="PRU00722"/>
    </source>
</evidence>
<evidence type="ECO:0000255" key="6">
    <source>
        <dbReference type="PROSITE-ProRule" id="PRU00798"/>
    </source>
</evidence>
<evidence type="ECO:0000256" key="7">
    <source>
        <dbReference type="SAM" id="MobiDB-lite"/>
    </source>
</evidence>
<evidence type="ECO:0000269" key="8">
    <source>
    </source>
</evidence>
<evidence type="ECO:0000305" key="9"/>
<evidence type="ECO:0007829" key="10">
    <source>
        <dbReference type="PDB" id="2DDI"/>
    </source>
</evidence>
<evidence type="ECO:0007829" key="11">
    <source>
        <dbReference type="PDB" id="2DDJ"/>
    </source>
</evidence>
<dbReference type="EMBL" id="AF422194">
    <property type="protein sequence ID" value="AAL18839.1"/>
    <property type="molecule type" value="mRNA"/>
</dbReference>
<dbReference type="EMBL" id="AK075356">
    <property type="protein sequence ID" value="BAC11566.1"/>
    <property type="status" value="ALT_FRAME"/>
    <property type="molecule type" value="mRNA"/>
</dbReference>
<dbReference type="EMBL" id="AE006464">
    <property type="protein sequence ID" value="AAK61237.1"/>
    <property type="status" value="ALT_SEQ"/>
    <property type="molecule type" value="Genomic_DNA"/>
</dbReference>
<dbReference type="EMBL" id="BC101602">
    <property type="protein sequence ID" value="AAI01603.1"/>
    <property type="molecule type" value="mRNA"/>
</dbReference>
<dbReference type="EMBL" id="BC101606">
    <property type="protein sequence ID" value="AAI01607.1"/>
    <property type="molecule type" value="mRNA"/>
</dbReference>
<dbReference type="CCDS" id="CCDS10414.1"/>
<dbReference type="RefSeq" id="NP_444514.1">
    <property type="nucleotide sequence ID" value="NM_053284.3"/>
</dbReference>
<dbReference type="PDB" id="2DDI">
    <property type="method" value="NMR"/>
    <property type="chains" value="A=357-411"/>
</dbReference>
<dbReference type="PDB" id="2DDJ">
    <property type="method" value="NMR"/>
    <property type="chains" value="A=357-411"/>
</dbReference>
<dbReference type="PDBsum" id="2DDI"/>
<dbReference type="PDBsum" id="2DDJ"/>
<dbReference type="SMR" id="Q96NZ8"/>
<dbReference type="BioGRID" id="125565">
    <property type="interactions" value="48"/>
</dbReference>
<dbReference type="FunCoup" id="Q96NZ8">
    <property type="interactions" value="230"/>
</dbReference>
<dbReference type="IntAct" id="Q96NZ8">
    <property type="interactions" value="15"/>
</dbReference>
<dbReference type="MINT" id="Q96NZ8"/>
<dbReference type="STRING" id="9606.ENSP00000324763"/>
<dbReference type="MEROPS" id="I02.033"/>
<dbReference type="MEROPS" id="I02.953"/>
<dbReference type="MEROPS" id="I17.951"/>
<dbReference type="GlyCosmos" id="Q96NZ8">
    <property type="glycosylation" value="1 site, No reported glycans"/>
</dbReference>
<dbReference type="GlyGen" id="Q96NZ8">
    <property type="glycosylation" value="3 sites"/>
</dbReference>
<dbReference type="iPTMnet" id="Q96NZ8"/>
<dbReference type="PhosphoSitePlus" id="Q96NZ8"/>
<dbReference type="BioMuta" id="WFIKKN1"/>
<dbReference type="DMDM" id="74717044"/>
<dbReference type="jPOST" id="Q96NZ8"/>
<dbReference type="MassIVE" id="Q96NZ8"/>
<dbReference type="PaxDb" id="9606-ENSP00000324763"/>
<dbReference type="PeptideAtlas" id="Q96NZ8"/>
<dbReference type="ProteomicsDB" id="77582"/>
<dbReference type="TopDownProteomics" id="Q96NZ8"/>
<dbReference type="Antibodypedia" id="42371">
    <property type="antibodies" value="42 antibodies from 11 providers"/>
</dbReference>
<dbReference type="DNASU" id="117166"/>
<dbReference type="Ensembl" id="ENST00000319070.3">
    <property type="protein sequence ID" value="ENSP00000324763.2"/>
    <property type="gene ID" value="ENSG00000127578.7"/>
</dbReference>
<dbReference type="GeneID" id="117166"/>
<dbReference type="KEGG" id="hsa:117166"/>
<dbReference type="MANE-Select" id="ENST00000319070.3">
    <property type="protein sequence ID" value="ENSP00000324763.2"/>
    <property type="RefSeq nucleotide sequence ID" value="NM_053284.3"/>
    <property type="RefSeq protein sequence ID" value="NP_444514.1"/>
</dbReference>
<dbReference type="UCSC" id="uc002cht.2">
    <property type="organism name" value="human"/>
</dbReference>
<dbReference type="AGR" id="HGNC:30912"/>
<dbReference type="CTD" id="117166"/>
<dbReference type="GeneCards" id="WFIKKN1"/>
<dbReference type="HGNC" id="HGNC:30912">
    <property type="gene designation" value="WFIKKN1"/>
</dbReference>
<dbReference type="HPA" id="ENSG00000127578">
    <property type="expression patterns" value="Tissue enhanced (brain, kidney)"/>
</dbReference>
<dbReference type="MIM" id="608021">
    <property type="type" value="gene"/>
</dbReference>
<dbReference type="neXtProt" id="NX_Q96NZ8"/>
<dbReference type="OpenTargets" id="ENSG00000127578"/>
<dbReference type="PharmGKB" id="PA134897686"/>
<dbReference type="VEuPathDB" id="HostDB:ENSG00000127578"/>
<dbReference type="eggNOG" id="KOG4597">
    <property type="taxonomic scope" value="Eukaryota"/>
</dbReference>
<dbReference type="GeneTree" id="ENSGT00940000158031"/>
<dbReference type="HOGENOM" id="CLU_037211_1_0_1"/>
<dbReference type="InParanoid" id="Q96NZ8"/>
<dbReference type="OMA" id="NFIMRPD"/>
<dbReference type="OrthoDB" id="8187079at2759"/>
<dbReference type="PAN-GO" id="Q96NZ8">
    <property type="GO annotations" value="4 GO annotations based on evolutionary models"/>
</dbReference>
<dbReference type="PhylomeDB" id="Q96NZ8"/>
<dbReference type="TreeFam" id="TF315349"/>
<dbReference type="PathwayCommons" id="Q96NZ8"/>
<dbReference type="SignaLink" id="Q96NZ8"/>
<dbReference type="BioGRID-ORCS" id="117166">
    <property type="hits" value="19 hits in 1138 CRISPR screens"/>
</dbReference>
<dbReference type="ChiTaRS" id="WFIKKN1">
    <property type="organism name" value="human"/>
</dbReference>
<dbReference type="EvolutionaryTrace" id="Q96NZ8"/>
<dbReference type="GeneWiki" id="WFIKKN1"/>
<dbReference type="GenomeRNAi" id="117166"/>
<dbReference type="Pharos" id="Q96NZ8">
    <property type="development level" value="Tbio"/>
</dbReference>
<dbReference type="PRO" id="PR:Q96NZ8"/>
<dbReference type="Proteomes" id="UP000005640">
    <property type="component" value="Chromosome 16"/>
</dbReference>
<dbReference type="RNAct" id="Q96NZ8">
    <property type="molecule type" value="protein"/>
</dbReference>
<dbReference type="Bgee" id="ENSG00000127578">
    <property type="expression patterns" value="Expressed in right hemisphere of cerebellum and 100 other cell types or tissues"/>
</dbReference>
<dbReference type="GO" id="GO:0005615">
    <property type="term" value="C:extracellular space"/>
    <property type="evidence" value="ECO:0000318"/>
    <property type="project" value="GO_Central"/>
</dbReference>
<dbReference type="GO" id="GO:0048019">
    <property type="term" value="F:receptor antagonist activity"/>
    <property type="evidence" value="ECO:0000314"/>
    <property type="project" value="UniProtKB"/>
</dbReference>
<dbReference type="GO" id="GO:0004867">
    <property type="term" value="F:serine-type endopeptidase inhibitor activity"/>
    <property type="evidence" value="ECO:0007669"/>
    <property type="project" value="UniProtKB-KW"/>
</dbReference>
<dbReference type="GO" id="GO:0050431">
    <property type="term" value="F:transforming growth factor beta binding"/>
    <property type="evidence" value="ECO:0000314"/>
    <property type="project" value="UniProtKB"/>
</dbReference>
<dbReference type="GO" id="GO:0055001">
    <property type="term" value="P:muscle cell development"/>
    <property type="evidence" value="ECO:0007669"/>
    <property type="project" value="Ensembl"/>
</dbReference>
<dbReference type="GO" id="GO:0030512">
    <property type="term" value="P:negative regulation of transforming growth factor beta receptor signaling pathway"/>
    <property type="evidence" value="ECO:0000314"/>
    <property type="project" value="UniProtKB"/>
</dbReference>
<dbReference type="GO" id="GO:0060021">
    <property type="term" value="P:roof of mouth development"/>
    <property type="evidence" value="ECO:0007669"/>
    <property type="project" value="Ensembl"/>
</dbReference>
<dbReference type="GO" id="GO:0001501">
    <property type="term" value="P:skeletal system development"/>
    <property type="evidence" value="ECO:0007669"/>
    <property type="project" value="Ensembl"/>
</dbReference>
<dbReference type="GO" id="GO:0007179">
    <property type="term" value="P:transforming growth factor beta receptor signaling pathway"/>
    <property type="evidence" value="ECO:0000318"/>
    <property type="project" value="GO_Central"/>
</dbReference>
<dbReference type="CDD" id="cd05765">
    <property type="entry name" value="IgI_3_WFIKKN-like"/>
    <property type="match status" value="1"/>
</dbReference>
<dbReference type="CDD" id="cd00104">
    <property type="entry name" value="KAZAL_FS"/>
    <property type="match status" value="1"/>
</dbReference>
<dbReference type="CDD" id="cd22606">
    <property type="entry name" value="Kunitz_WFIKKN_2-like"/>
    <property type="match status" value="1"/>
</dbReference>
<dbReference type="CDD" id="cd03575">
    <property type="entry name" value="NTR_WFIKKN"/>
    <property type="match status" value="1"/>
</dbReference>
<dbReference type="FunFam" id="4.10.410.10:FF:000002">
    <property type="entry name" value="WAP, follistatin/kazal, immunoglobulin, kunitz and netrin domain-containing 2"/>
    <property type="match status" value="1"/>
</dbReference>
<dbReference type="FunFam" id="4.10.410.10:FF:000022">
    <property type="entry name" value="WAP, Kazal, immunoglobulin, Kunitz and NTR domain-containing protein 1"/>
    <property type="match status" value="1"/>
</dbReference>
<dbReference type="FunFam" id="2.40.50.120:FF:000004">
    <property type="entry name" value="WAP, Kazal, immunoglobulin, Kunitz and NTR domain-containing protein 2"/>
    <property type="match status" value="1"/>
</dbReference>
<dbReference type="FunFam" id="2.60.40.10:FF:000473">
    <property type="entry name" value="WAP, Kazal, immunoglobulin, Kunitz and NTR domain-containing protein 2"/>
    <property type="match status" value="1"/>
</dbReference>
<dbReference type="FunFam" id="3.30.60.30:FF:000014">
    <property type="entry name" value="WAP, Kazal, immunoglobulin, Kunitz and NTR domain-containing protein 2"/>
    <property type="match status" value="1"/>
</dbReference>
<dbReference type="FunFam" id="4.10.75.10:FF:000002">
    <property type="entry name" value="WAP, Kazal, immunoglobulin, Kunitz and NTR domain-containing protein 2"/>
    <property type="match status" value="1"/>
</dbReference>
<dbReference type="Gene3D" id="2.40.50.120">
    <property type="match status" value="1"/>
</dbReference>
<dbReference type="Gene3D" id="3.30.60.30">
    <property type="match status" value="1"/>
</dbReference>
<dbReference type="Gene3D" id="4.10.75.10">
    <property type="entry name" value="Elafin-like"/>
    <property type="match status" value="1"/>
</dbReference>
<dbReference type="Gene3D" id="2.60.40.10">
    <property type="entry name" value="Immunoglobulins"/>
    <property type="match status" value="1"/>
</dbReference>
<dbReference type="Gene3D" id="4.10.410.10">
    <property type="entry name" value="Pancreatic trypsin inhibitor Kunitz domain"/>
    <property type="match status" value="2"/>
</dbReference>
<dbReference type="InterPro" id="IPR036645">
    <property type="entry name" value="Elafin-like_sf"/>
</dbReference>
<dbReference type="InterPro" id="IPR007110">
    <property type="entry name" value="Ig-like_dom"/>
</dbReference>
<dbReference type="InterPro" id="IPR036179">
    <property type="entry name" value="Ig-like_dom_sf"/>
</dbReference>
<dbReference type="InterPro" id="IPR013783">
    <property type="entry name" value="Ig-like_fold"/>
</dbReference>
<dbReference type="InterPro" id="IPR003599">
    <property type="entry name" value="Ig_sub"/>
</dbReference>
<dbReference type="InterPro" id="IPR003598">
    <property type="entry name" value="Ig_sub2"/>
</dbReference>
<dbReference type="InterPro" id="IPR002350">
    <property type="entry name" value="Kazal_dom"/>
</dbReference>
<dbReference type="InterPro" id="IPR036058">
    <property type="entry name" value="Kazal_dom_sf"/>
</dbReference>
<dbReference type="InterPro" id="IPR002223">
    <property type="entry name" value="Kunitz_BPTI"/>
</dbReference>
<dbReference type="InterPro" id="IPR036880">
    <property type="entry name" value="Kunitz_BPTI_sf"/>
</dbReference>
<dbReference type="InterPro" id="IPR001134">
    <property type="entry name" value="Netrin_domain"/>
</dbReference>
<dbReference type="InterPro" id="IPR020901">
    <property type="entry name" value="Prtase_inh_Kunz-CS"/>
</dbReference>
<dbReference type="InterPro" id="IPR008993">
    <property type="entry name" value="TIMP-like_OB-fold"/>
</dbReference>
<dbReference type="InterPro" id="IPR008197">
    <property type="entry name" value="WAP_dom"/>
</dbReference>
<dbReference type="InterPro" id="IPR033638">
    <property type="entry name" value="WFIKKN1/2_Ig-like_3"/>
</dbReference>
<dbReference type="PANTHER" id="PTHR45938">
    <property type="entry name" value="ACP24A4-RELATED"/>
    <property type="match status" value="1"/>
</dbReference>
<dbReference type="PANTHER" id="PTHR45938:SF6">
    <property type="entry name" value="WAP, KAZAL, IMMUNOGLOBULIN, KUNITZ AND NTR DOMAIN-CONTAINING PROTEIN 1"/>
    <property type="match status" value="1"/>
</dbReference>
<dbReference type="Pfam" id="PF13927">
    <property type="entry name" value="Ig_3"/>
    <property type="match status" value="1"/>
</dbReference>
<dbReference type="Pfam" id="PF00014">
    <property type="entry name" value="Kunitz_BPTI"/>
    <property type="match status" value="2"/>
</dbReference>
<dbReference type="Pfam" id="PF00095">
    <property type="entry name" value="WAP"/>
    <property type="match status" value="1"/>
</dbReference>
<dbReference type="PRINTS" id="PR00759">
    <property type="entry name" value="BASICPTASE"/>
</dbReference>
<dbReference type="SMART" id="SM00409">
    <property type="entry name" value="IG"/>
    <property type="match status" value="1"/>
</dbReference>
<dbReference type="SMART" id="SM00408">
    <property type="entry name" value="IGc2"/>
    <property type="match status" value="1"/>
</dbReference>
<dbReference type="SMART" id="SM00131">
    <property type="entry name" value="KU"/>
    <property type="match status" value="2"/>
</dbReference>
<dbReference type="SMART" id="SM00217">
    <property type="entry name" value="WAP"/>
    <property type="match status" value="1"/>
</dbReference>
<dbReference type="SUPFAM" id="SSF57362">
    <property type="entry name" value="BPTI-like"/>
    <property type="match status" value="2"/>
</dbReference>
<dbReference type="SUPFAM" id="SSF57256">
    <property type="entry name" value="Elafin-like"/>
    <property type="match status" value="1"/>
</dbReference>
<dbReference type="SUPFAM" id="SSF48726">
    <property type="entry name" value="Immunoglobulin"/>
    <property type="match status" value="1"/>
</dbReference>
<dbReference type="SUPFAM" id="SSF100895">
    <property type="entry name" value="Kazal-type serine protease inhibitors"/>
    <property type="match status" value="1"/>
</dbReference>
<dbReference type="SUPFAM" id="SSF50242">
    <property type="entry name" value="TIMP-like"/>
    <property type="match status" value="1"/>
</dbReference>
<dbReference type="PROSITE" id="PS00280">
    <property type="entry name" value="BPTI_KUNITZ_1"/>
    <property type="match status" value="2"/>
</dbReference>
<dbReference type="PROSITE" id="PS50279">
    <property type="entry name" value="BPTI_KUNITZ_2"/>
    <property type="match status" value="2"/>
</dbReference>
<dbReference type="PROSITE" id="PS50835">
    <property type="entry name" value="IG_LIKE"/>
    <property type="match status" value="1"/>
</dbReference>
<dbReference type="PROSITE" id="PS51465">
    <property type="entry name" value="KAZAL_2"/>
    <property type="match status" value="1"/>
</dbReference>
<dbReference type="PROSITE" id="PS50189">
    <property type="entry name" value="NTR"/>
    <property type="match status" value="1"/>
</dbReference>
<dbReference type="PROSITE" id="PS51390">
    <property type="entry name" value="WAP"/>
    <property type="match status" value="1"/>
</dbReference>
<proteinExistence type="evidence at protein level"/>
<protein>
    <recommendedName>
        <fullName>WAP, Kazal, immunoglobulin, Kunitz and NTR domain-containing protein 1</fullName>
    </recommendedName>
    <alternativeName>
        <fullName>Growth and differentiation factor-associated serum protein 2</fullName>
        <shortName>GASP-2</shortName>
        <shortName>hGASP-2</shortName>
    </alternativeName>
    <alternativeName>
        <fullName>WAP, follistatin, immunoglobulin, Kunitz and NTR domain-containing protein</fullName>
    </alternativeName>
</protein>
<sequence length="548" mass="58798">MPALRPLLPLLLLLRLTSGAGLLPGLGSHPGVCPNQLSPNLWVDAQSTCERECSRDQDCAAAEKCCINVCGLHSCVAARFPGSPAAPTTAASCEGFVCPQQGSDCDIWDGQPVCRCRDRCEKEPSFTCASDGLTYYNRCYMDAEACLRGLHLHIVPCKHVLSWPPSSPGPPETTARPTPGAAPVPPALYSSPSPQAVQVGGTASLHCDVSGRPPPAVTWEKQSHQRENLIMRPDQMYGNVVVTSIGQLVLYNARPEDAGLYTCTARNAAGLLRADFPLSVVQREPARDAAPSIPAPAECLPDVQACTGPTSPHLVLWHYDPQRGGCMTFPARGCDGAARGFETYEACQQACARGPGDACVLPAVQGPCRGWEPRWAYSPLLQQCHPFVYGGCEGNGNNFHSRESCEDACPVPRTPPCRACRLRSKLALSLCRSDFAIVGRLTEVLEEPEAAGGIARVALEDVLKDDKMGLKFLGTKYLEVTLSGMDWACPCPNMTAGDGPLVIMGEVRDGVAVLDAGSYVRAASEKRVKKILELLEKQACELLNRFQD</sequence>
<keyword id="KW-0002">3D-structure</keyword>
<keyword id="KW-1015">Disulfide bond</keyword>
<keyword id="KW-0325">Glycoprotein</keyword>
<keyword id="KW-0393">Immunoglobulin domain</keyword>
<keyword id="KW-0481">Metalloenzyme inhibitor</keyword>
<keyword id="KW-0483">Metalloprotease inhibitor</keyword>
<keyword id="KW-0646">Protease inhibitor</keyword>
<keyword id="KW-1267">Proteomics identification</keyword>
<keyword id="KW-1185">Reference proteome</keyword>
<keyword id="KW-0677">Repeat</keyword>
<keyword id="KW-0964">Secreted</keyword>
<keyword id="KW-0722">Serine protease inhibitor</keyword>
<keyword id="KW-0732">Signal</keyword>
<feature type="signal peptide" evidence="2">
    <location>
        <begin position="1"/>
        <end position="19"/>
    </location>
</feature>
<feature type="chain" id="PRO_0000307816" description="WAP, Kazal, immunoglobulin, Kunitz and NTR domain-containing protein 1">
    <location>
        <begin position="20"/>
        <end position="548"/>
    </location>
</feature>
<feature type="domain" description="WAP" evidence="5">
    <location>
        <begin position="26"/>
        <end position="79"/>
    </location>
</feature>
<feature type="domain" description="Kazal-like" evidence="6">
    <location>
        <begin position="108"/>
        <end position="159"/>
    </location>
</feature>
<feature type="domain" description="Ig-like C2-type">
    <location>
        <begin position="186"/>
        <end position="279"/>
    </location>
</feature>
<feature type="domain" description="BPTI/Kunitz inhibitor 1" evidence="3">
    <location>
        <begin position="299"/>
        <end position="351"/>
    </location>
</feature>
<feature type="domain" description="BPTI/Kunitz inhibitor 2" evidence="3">
    <location>
        <begin position="359"/>
        <end position="409"/>
    </location>
</feature>
<feature type="domain" description="NTR" evidence="4">
    <location>
        <begin position="409"/>
        <end position="540"/>
    </location>
</feature>
<feature type="region of interest" description="Disordered" evidence="7">
    <location>
        <begin position="164"/>
        <end position="184"/>
    </location>
</feature>
<feature type="site" description="Reactive bond" evidence="6">
    <location>
        <begin position="122"/>
        <end position="123"/>
    </location>
</feature>
<feature type="glycosylation site" description="N-linked (GlcNAc...) asparagine" evidence="2">
    <location>
        <position position="493"/>
    </location>
</feature>
<feature type="disulfide bond" evidence="1">
    <location>
        <begin position="33"/>
        <end position="66"/>
    </location>
</feature>
<feature type="disulfide bond" evidence="1">
    <location>
        <begin position="49"/>
        <end position="70"/>
    </location>
</feature>
<feature type="disulfide bond" evidence="1">
    <location>
        <begin position="53"/>
        <end position="65"/>
    </location>
</feature>
<feature type="disulfide bond" evidence="1">
    <location>
        <begin position="59"/>
        <end position="75"/>
    </location>
</feature>
<feature type="disulfide bond" evidence="1">
    <location>
        <begin position="116"/>
        <end position="146"/>
    </location>
</feature>
<feature type="disulfide bond" evidence="1">
    <location>
        <begin position="120"/>
        <end position="139"/>
    </location>
</feature>
<feature type="disulfide bond" evidence="1">
    <location>
        <begin position="128"/>
        <end position="157"/>
    </location>
</feature>
<feature type="disulfide bond" evidence="1">
    <location>
        <begin position="207"/>
        <end position="263"/>
    </location>
</feature>
<feature type="disulfide bond" evidence="1">
    <location>
        <begin position="299"/>
        <end position="351"/>
    </location>
</feature>
<feature type="disulfide bond" evidence="1">
    <location>
        <begin position="306"/>
        <end position="334"/>
    </location>
</feature>
<feature type="disulfide bond" evidence="1">
    <location>
        <begin position="326"/>
        <end position="347"/>
    </location>
</feature>
<feature type="disulfide bond" evidence="1">
    <location>
        <begin position="359"/>
        <end position="409"/>
    </location>
</feature>
<feature type="disulfide bond" evidence="1">
    <location>
        <begin position="368"/>
        <end position="392"/>
    </location>
</feature>
<feature type="disulfide bond" evidence="1">
    <location>
        <begin position="384"/>
        <end position="405"/>
    </location>
</feature>
<feature type="disulfide bond" evidence="1">
    <location>
        <begin position="417"/>
        <end position="489"/>
    </location>
</feature>
<feature type="disulfide bond" evidence="1">
    <location>
        <begin position="420"/>
        <end position="491"/>
    </location>
</feature>
<feature type="disulfide bond" evidence="1">
    <location>
        <begin position="431"/>
        <end position="540"/>
    </location>
</feature>
<feature type="helix" evidence="10">
    <location>
        <begin position="358"/>
        <end position="360"/>
    </location>
</feature>
<feature type="strand" evidence="10">
    <location>
        <begin position="372"/>
        <end position="378"/>
    </location>
</feature>
<feature type="helix" evidence="10">
    <location>
        <begin position="379"/>
        <end position="381"/>
    </location>
</feature>
<feature type="strand" evidence="10">
    <location>
        <begin position="383"/>
        <end position="389"/>
    </location>
</feature>
<feature type="strand" evidence="10">
    <location>
        <begin position="391"/>
        <end position="393"/>
    </location>
</feature>
<feature type="strand" evidence="10">
    <location>
        <begin position="399"/>
        <end position="401"/>
    </location>
</feature>
<feature type="helix" evidence="10">
    <location>
        <begin position="402"/>
        <end position="408"/>
    </location>
</feature>
<feature type="strand" evidence="11">
    <location>
        <begin position="409"/>
        <end position="411"/>
    </location>
</feature>
<organism>
    <name type="scientific">Homo sapiens</name>
    <name type="common">Human</name>
    <dbReference type="NCBI Taxonomy" id="9606"/>
    <lineage>
        <taxon>Eukaryota</taxon>
        <taxon>Metazoa</taxon>
        <taxon>Chordata</taxon>
        <taxon>Craniata</taxon>
        <taxon>Vertebrata</taxon>
        <taxon>Euteleostomi</taxon>
        <taxon>Mammalia</taxon>
        <taxon>Eutheria</taxon>
        <taxon>Euarchontoglires</taxon>
        <taxon>Primates</taxon>
        <taxon>Haplorrhini</taxon>
        <taxon>Catarrhini</taxon>
        <taxon>Hominidae</taxon>
        <taxon>Homo</taxon>
    </lineage>
</organism>